<name>MIX23_BOVIN</name>
<protein>
    <recommendedName>
        <fullName evidence="3">Protein MIX23</fullName>
    </recommendedName>
    <alternativeName>
        <fullName>Coiled-coil domain-containing protein 58</fullName>
    </alternativeName>
</protein>
<proteinExistence type="evidence at transcript level"/>
<evidence type="ECO:0000250" key="1">
    <source>
        <dbReference type="UniProtKB" id="Q4VC31"/>
    </source>
</evidence>
<evidence type="ECO:0000255" key="2"/>
<evidence type="ECO:0000305" key="3"/>
<feature type="initiator methionine" description="Removed" evidence="1">
    <location>
        <position position="1"/>
    </location>
</feature>
<feature type="chain" id="PRO_0000360034" description="Protein MIX23">
    <location>
        <begin position="2"/>
        <end position="144"/>
    </location>
</feature>
<feature type="coiled-coil region" evidence="2">
    <location>
        <begin position="82"/>
        <end position="120"/>
    </location>
</feature>
<feature type="modified residue" description="N-acetylalanine" evidence="1">
    <location>
        <position position="2"/>
    </location>
</feature>
<feature type="modified residue" description="N6-acetyllysine" evidence="1">
    <location>
        <position position="100"/>
    </location>
</feature>
<accession>A4FUI1</accession>
<gene>
    <name type="primary">MIX23</name>
    <name type="synonym">CCDC58</name>
</gene>
<comment type="similarity">
    <text evidence="3">Belongs to the MIX23 family.</text>
</comment>
<organism>
    <name type="scientific">Bos taurus</name>
    <name type="common">Bovine</name>
    <dbReference type="NCBI Taxonomy" id="9913"/>
    <lineage>
        <taxon>Eukaryota</taxon>
        <taxon>Metazoa</taxon>
        <taxon>Chordata</taxon>
        <taxon>Craniata</taxon>
        <taxon>Vertebrata</taxon>
        <taxon>Euteleostomi</taxon>
        <taxon>Mammalia</taxon>
        <taxon>Eutheria</taxon>
        <taxon>Laurasiatheria</taxon>
        <taxon>Artiodactyla</taxon>
        <taxon>Ruminantia</taxon>
        <taxon>Pecora</taxon>
        <taxon>Bovidae</taxon>
        <taxon>Bovinae</taxon>
        <taxon>Bos</taxon>
    </lineage>
</organism>
<dbReference type="EMBL" id="BC114911">
    <property type="protein sequence ID" value="AAI14912.1"/>
    <property type="molecule type" value="mRNA"/>
</dbReference>
<dbReference type="RefSeq" id="NP_001076858.1">
    <property type="nucleotide sequence ID" value="NM_001083389.2"/>
</dbReference>
<dbReference type="SMR" id="A4FUI1"/>
<dbReference type="FunCoup" id="A4FUI1">
    <property type="interactions" value="1706"/>
</dbReference>
<dbReference type="STRING" id="9913.ENSBTAP00000072117"/>
<dbReference type="PaxDb" id="9913-ENSBTAP00000014792"/>
<dbReference type="Ensembl" id="ENSBTAT00000133721.1">
    <property type="protein sequence ID" value="ENSBTAP00000081181.1"/>
    <property type="gene ID" value="ENSBTAG00000063883.1"/>
</dbReference>
<dbReference type="GeneID" id="508149"/>
<dbReference type="KEGG" id="bta:508149"/>
<dbReference type="CTD" id="131076"/>
<dbReference type="VEuPathDB" id="HostDB:ENSBTAG00000054520"/>
<dbReference type="eggNOG" id="KOG4613">
    <property type="taxonomic scope" value="Eukaryota"/>
</dbReference>
<dbReference type="GeneTree" id="ENSGT00390000011053"/>
<dbReference type="HOGENOM" id="CLU_123941_0_0_1"/>
<dbReference type="InParanoid" id="A4FUI1"/>
<dbReference type="OMA" id="CRYFEPP"/>
<dbReference type="OrthoDB" id="5593818at2759"/>
<dbReference type="TreeFam" id="TF324875"/>
<dbReference type="Proteomes" id="UP000009136">
    <property type="component" value="Chromosome 1"/>
</dbReference>
<dbReference type="Bgee" id="ENSBTAG00000054520">
    <property type="expression patterns" value="Expressed in oocyte and 105 other cell types or tissues"/>
</dbReference>
<dbReference type="GO" id="GO:0005758">
    <property type="term" value="C:mitochondrial intermembrane space"/>
    <property type="evidence" value="ECO:0007669"/>
    <property type="project" value="InterPro"/>
</dbReference>
<dbReference type="GO" id="GO:0005739">
    <property type="term" value="C:mitochondrion"/>
    <property type="evidence" value="ECO:0000318"/>
    <property type="project" value="GO_Central"/>
</dbReference>
<dbReference type="InterPro" id="IPR019171">
    <property type="entry name" value="MIX23"/>
</dbReference>
<dbReference type="PANTHER" id="PTHR31905">
    <property type="entry name" value="COILED-COIL DOMAIN-CONTAINING PROTEIN 58"/>
    <property type="match status" value="1"/>
</dbReference>
<dbReference type="PANTHER" id="PTHR31905:SF2">
    <property type="entry name" value="PROTEIN MIX23"/>
    <property type="match status" value="1"/>
</dbReference>
<dbReference type="Pfam" id="PF09774">
    <property type="entry name" value="MIX23"/>
    <property type="match status" value="1"/>
</dbReference>
<reference key="1">
    <citation type="submission" date="2006-04" db="EMBL/GenBank/DDBJ databases">
        <authorList>
            <consortium name="NIH - Mammalian Gene Collection (MGC) project"/>
        </authorList>
    </citation>
    <scope>NUCLEOTIDE SEQUENCE [LARGE SCALE MRNA]</scope>
    <source>
        <strain>Hereford</strain>
        <tissue>Fetal cerebellum</tissue>
    </source>
</reference>
<sequence>MAAPSGGVNCEEFAEFQELLKVMRTIDDRIVHELNTTVPTASFAGKIDASQTCKQLYESLMEAHASRDRVIKNCIAQTSSVVKQLREEREKNLDDLTLLKQLRKEQTKLKWMQSELNVEEVVNDRSWKVFNERCRIHFKPPKNE</sequence>
<keyword id="KW-0007">Acetylation</keyword>
<keyword id="KW-0175">Coiled coil</keyword>
<keyword id="KW-1185">Reference proteome</keyword>